<gene>
    <name evidence="1" type="primary">fusA</name>
    <name type="ordered locus">BAbS19_I11740</name>
</gene>
<protein>
    <recommendedName>
        <fullName evidence="1">Elongation factor G</fullName>
        <shortName evidence="1">EF-G</shortName>
    </recommendedName>
</protein>
<evidence type="ECO:0000255" key="1">
    <source>
        <dbReference type="HAMAP-Rule" id="MF_00054"/>
    </source>
</evidence>
<comment type="function">
    <text evidence="1">Catalyzes the GTP-dependent ribosomal translocation step during translation elongation. During this step, the ribosome changes from the pre-translocational (PRE) to the post-translocational (POST) state as the newly formed A-site-bound peptidyl-tRNA and P-site-bound deacylated tRNA move to the P and E sites, respectively. Catalyzes the coordinated movement of the two tRNA molecules, the mRNA and conformational changes in the ribosome.</text>
</comment>
<comment type="subcellular location">
    <subcellularLocation>
        <location evidence="1">Cytoplasm</location>
    </subcellularLocation>
</comment>
<comment type="similarity">
    <text evidence="1">Belongs to the TRAFAC class translation factor GTPase superfamily. Classic translation factor GTPase family. EF-G/EF-2 subfamily.</text>
</comment>
<keyword id="KW-0963">Cytoplasm</keyword>
<keyword id="KW-0251">Elongation factor</keyword>
<keyword id="KW-0342">GTP-binding</keyword>
<keyword id="KW-0547">Nucleotide-binding</keyword>
<keyword id="KW-0648">Protein biosynthesis</keyword>
<name>EFG_BRUA1</name>
<dbReference type="EMBL" id="CP000887">
    <property type="protein sequence ID" value="ACD72679.1"/>
    <property type="molecule type" value="Genomic_DNA"/>
</dbReference>
<dbReference type="RefSeq" id="WP_002964364.1">
    <property type="nucleotide sequence ID" value="NC_010742.1"/>
</dbReference>
<dbReference type="SMR" id="B2S682"/>
<dbReference type="GeneID" id="93016437"/>
<dbReference type="KEGG" id="bmc:BAbS19_I11740"/>
<dbReference type="HOGENOM" id="CLU_002794_4_1_5"/>
<dbReference type="Proteomes" id="UP000002565">
    <property type="component" value="Chromosome 1"/>
</dbReference>
<dbReference type="GO" id="GO:0005737">
    <property type="term" value="C:cytoplasm"/>
    <property type="evidence" value="ECO:0007669"/>
    <property type="project" value="UniProtKB-SubCell"/>
</dbReference>
<dbReference type="GO" id="GO:0005525">
    <property type="term" value="F:GTP binding"/>
    <property type="evidence" value="ECO:0007669"/>
    <property type="project" value="UniProtKB-UniRule"/>
</dbReference>
<dbReference type="GO" id="GO:0003924">
    <property type="term" value="F:GTPase activity"/>
    <property type="evidence" value="ECO:0007669"/>
    <property type="project" value="InterPro"/>
</dbReference>
<dbReference type="GO" id="GO:0097216">
    <property type="term" value="F:guanosine tetraphosphate binding"/>
    <property type="evidence" value="ECO:0007669"/>
    <property type="project" value="UniProtKB-ARBA"/>
</dbReference>
<dbReference type="GO" id="GO:0003746">
    <property type="term" value="F:translation elongation factor activity"/>
    <property type="evidence" value="ECO:0007669"/>
    <property type="project" value="UniProtKB-UniRule"/>
</dbReference>
<dbReference type="GO" id="GO:0032790">
    <property type="term" value="P:ribosome disassembly"/>
    <property type="evidence" value="ECO:0007669"/>
    <property type="project" value="TreeGrafter"/>
</dbReference>
<dbReference type="CDD" id="cd01886">
    <property type="entry name" value="EF-G"/>
    <property type="match status" value="1"/>
</dbReference>
<dbReference type="CDD" id="cd16262">
    <property type="entry name" value="EFG_III"/>
    <property type="match status" value="1"/>
</dbReference>
<dbReference type="CDD" id="cd01434">
    <property type="entry name" value="EFG_mtEFG1_IV"/>
    <property type="match status" value="1"/>
</dbReference>
<dbReference type="CDD" id="cd03713">
    <property type="entry name" value="EFG_mtEFG_C"/>
    <property type="match status" value="1"/>
</dbReference>
<dbReference type="CDD" id="cd04088">
    <property type="entry name" value="EFG_mtEFG_II"/>
    <property type="match status" value="1"/>
</dbReference>
<dbReference type="FunFam" id="2.40.30.10:FF:000006">
    <property type="entry name" value="Elongation factor G"/>
    <property type="match status" value="1"/>
</dbReference>
<dbReference type="FunFam" id="3.30.230.10:FF:000003">
    <property type="entry name" value="Elongation factor G"/>
    <property type="match status" value="1"/>
</dbReference>
<dbReference type="FunFam" id="3.30.70.240:FF:000001">
    <property type="entry name" value="Elongation factor G"/>
    <property type="match status" value="1"/>
</dbReference>
<dbReference type="FunFam" id="3.30.70.870:FF:000001">
    <property type="entry name" value="Elongation factor G"/>
    <property type="match status" value="1"/>
</dbReference>
<dbReference type="FunFam" id="3.40.50.300:FF:000029">
    <property type="entry name" value="Elongation factor G"/>
    <property type="match status" value="1"/>
</dbReference>
<dbReference type="Gene3D" id="3.30.230.10">
    <property type="match status" value="1"/>
</dbReference>
<dbReference type="Gene3D" id="3.30.70.240">
    <property type="match status" value="1"/>
</dbReference>
<dbReference type="Gene3D" id="3.30.70.870">
    <property type="entry name" value="Elongation Factor G (Translational Gtpase), domain 3"/>
    <property type="match status" value="1"/>
</dbReference>
<dbReference type="Gene3D" id="3.40.50.300">
    <property type="entry name" value="P-loop containing nucleotide triphosphate hydrolases"/>
    <property type="match status" value="1"/>
</dbReference>
<dbReference type="Gene3D" id="2.40.30.10">
    <property type="entry name" value="Translation factors"/>
    <property type="match status" value="1"/>
</dbReference>
<dbReference type="HAMAP" id="MF_00054_B">
    <property type="entry name" value="EF_G_EF_2_B"/>
    <property type="match status" value="1"/>
</dbReference>
<dbReference type="InterPro" id="IPR041095">
    <property type="entry name" value="EFG_II"/>
</dbReference>
<dbReference type="InterPro" id="IPR009022">
    <property type="entry name" value="EFG_III"/>
</dbReference>
<dbReference type="InterPro" id="IPR035647">
    <property type="entry name" value="EFG_III/V"/>
</dbReference>
<dbReference type="InterPro" id="IPR047872">
    <property type="entry name" value="EFG_IV"/>
</dbReference>
<dbReference type="InterPro" id="IPR035649">
    <property type="entry name" value="EFG_V"/>
</dbReference>
<dbReference type="InterPro" id="IPR000640">
    <property type="entry name" value="EFG_V-like"/>
</dbReference>
<dbReference type="InterPro" id="IPR004161">
    <property type="entry name" value="EFTu-like_2"/>
</dbReference>
<dbReference type="InterPro" id="IPR031157">
    <property type="entry name" value="G_TR_CS"/>
</dbReference>
<dbReference type="InterPro" id="IPR027417">
    <property type="entry name" value="P-loop_NTPase"/>
</dbReference>
<dbReference type="InterPro" id="IPR020568">
    <property type="entry name" value="Ribosomal_Su5_D2-typ_SF"/>
</dbReference>
<dbReference type="InterPro" id="IPR014721">
    <property type="entry name" value="Ribsml_uS5_D2-typ_fold_subgr"/>
</dbReference>
<dbReference type="InterPro" id="IPR005225">
    <property type="entry name" value="Small_GTP-bd"/>
</dbReference>
<dbReference type="InterPro" id="IPR000795">
    <property type="entry name" value="T_Tr_GTP-bd_dom"/>
</dbReference>
<dbReference type="InterPro" id="IPR009000">
    <property type="entry name" value="Transl_B-barrel_sf"/>
</dbReference>
<dbReference type="InterPro" id="IPR004540">
    <property type="entry name" value="Transl_elong_EFG/EF2"/>
</dbReference>
<dbReference type="InterPro" id="IPR005517">
    <property type="entry name" value="Transl_elong_EFG/EF2_IV"/>
</dbReference>
<dbReference type="NCBIfam" id="TIGR00484">
    <property type="entry name" value="EF-G"/>
    <property type="match status" value="1"/>
</dbReference>
<dbReference type="NCBIfam" id="NF009381">
    <property type="entry name" value="PRK12740.1-5"/>
    <property type="match status" value="1"/>
</dbReference>
<dbReference type="NCBIfam" id="TIGR00231">
    <property type="entry name" value="small_GTP"/>
    <property type="match status" value="1"/>
</dbReference>
<dbReference type="PANTHER" id="PTHR43261:SF1">
    <property type="entry name" value="RIBOSOME-RELEASING FACTOR 2, MITOCHONDRIAL"/>
    <property type="match status" value="1"/>
</dbReference>
<dbReference type="PANTHER" id="PTHR43261">
    <property type="entry name" value="TRANSLATION ELONGATION FACTOR G-RELATED"/>
    <property type="match status" value="1"/>
</dbReference>
<dbReference type="Pfam" id="PF00679">
    <property type="entry name" value="EFG_C"/>
    <property type="match status" value="1"/>
</dbReference>
<dbReference type="Pfam" id="PF14492">
    <property type="entry name" value="EFG_III"/>
    <property type="match status" value="1"/>
</dbReference>
<dbReference type="Pfam" id="PF03764">
    <property type="entry name" value="EFG_IV"/>
    <property type="match status" value="1"/>
</dbReference>
<dbReference type="Pfam" id="PF00009">
    <property type="entry name" value="GTP_EFTU"/>
    <property type="match status" value="1"/>
</dbReference>
<dbReference type="Pfam" id="PF03144">
    <property type="entry name" value="GTP_EFTU_D2"/>
    <property type="match status" value="1"/>
</dbReference>
<dbReference type="PRINTS" id="PR00315">
    <property type="entry name" value="ELONGATNFCT"/>
</dbReference>
<dbReference type="SMART" id="SM00838">
    <property type="entry name" value="EFG_C"/>
    <property type="match status" value="1"/>
</dbReference>
<dbReference type="SMART" id="SM00889">
    <property type="entry name" value="EFG_IV"/>
    <property type="match status" value="1"/>
</dbReference>
<dbReference type="SUPFAM" id="SSF54980">
    <property type="entry name" value="EF-G C-terminal domain-like"/>
    <property type="match status" value="2"/>
</dbReference>
<dbReference type="SUPFAM" id="SSF52540">
    <property type="entry name" value="P-loop containing nucleoside triphosphate hydrolases"/>
    <property type="match status" value="1"/>
</dbReference>
<dbReference type="SUPFAM" id="SSF54211">
    <property type="entry name" value="Ribosomal protein S5 domain 2-like"/>
    <property type="match status" value="1"/>
</dbReference>
<dbReference type="SUPFAM" id="SSF50447">
    <property type="entry name" value="Translation proteins"/>
    <property type="match status" value="1"/>
</dbReference>
<dbReference type="PROSITE" id="PS00301">
    <property type="entry name" value="G_TR_1"/>
    <property type="match status" value="1"/>
</dbReference>
<dbReference type="PROSITE" id="PS51722">
    <property type="entry name" value="G_TR_2"/>
    <property type="match status" value="1"/>
</dbReference>
<reference key="1">
    <citation type="journal article" date="2008" name="PLoS ONE">
        <title>Genome sequence of Brucella abortus vaccine strain S19 compared to virulent strains yields candidate virulence genes.</title>
        <authorList>
            <person name="Crasta O.R."/>
            <person name="Folkerts O."/>
            <person name="Fei Z."/>
            <person name="Mane S.P."/>
            <person name="Evans C."/>
            <person name="Martino-Catt S."/>
            <person name="Bricker B."/>
            <person name="Yu G."/>
            <person name="Du L."/>
            <person name="Sobral B.W."/>
        </authorList>
    </citation>
    <scope>NUCLEOTIDE SEQUENCE [LARGE SCALE GENOMIC DNA]</scope>
    <source>
        <strain>S19</strain>
    </source>
</reference>
<organism>
    <name type="scientific">Brucella abortus (strain S19)</name>
    <dbReference type="NCBI Taxonomy" id="430066"/>
    <lineage>
        <taxon>Bacteria</taxon>
        <taxon>Pseudomonadati</taxon>
        <taxon>Pseudomonadota</taxon>
        <taxon>Alphaproteobacteria</taxon>
        <taxon>Hyphomicrobiales</taxon>
        <taxon>Brucellaceae</taxon>
        <taxon>Brucella/Ochrobactrum group</taxon>
        <taxon>Brucella</taxon>
    </lineage>
</organism>
<feature type="chain" id="PRO_1000091694" description="Elongation factor G">
    <location>
        <begin position="1"/>
        <end position="694"/>
    </location>
</feature>
<feature type="domain" description="tr-type G">
    <location>
        <begin position="8"/>
        <end position="287"/>
    </location>
</feature>
<feature type="binding site" evidence="1">
    <location>
        <begin position="17"/>
        <end position="24"/>
    </location>
    <ligand>
        <name>GTP</name>
        <dbReference type="ChEBI" id="CHEBI:37565"/>
    </ligand>
</feature>
<feature type="binding site" evidence="1">
    <location>
        <begin position="86"/>
        <end position="90"/>
    </location>
    <ligand>
        <name>GTP</name>
        <dbReference type="ChEBI" id="CHEBI:37565"/>
    </ligand>
</feature>
<feature type="binding site" evidence="1">
    <location>
        <begin position="140"/>
        <end position="143"/>
    </location>
    <ligand>
        <name>GTP</name>
        <dbReference type="ChEBI" id="CHEBI:37565"/>
    </ligand>
</feature>
<proteinExistence type="inferred from homology"/>
<accession>B2S682</accession>
<sequence length="694" mass="76235">MAREYKIEDYRNFGIMAHIDAGKTTMTERILFYTGKNHKIGETHDGASTMDWMEQEQERGITITSAATTTFWQGRDGKKRRFNIIDTPGHVDFTIEVERSLRVLDGAIALLDANAGVEPQTETVWRQAEKYHVPRMVFVNKMDKIGADFYRSVEMVGSRLGAVALPVQLPIGAENDFVGVVDLIEMKALTWDGTIGAPATVGEIPADMADKAEEYREKLIELAVEIDEAAMEAYLEGTMPTNDELRALIRKGTIEVKFHPILCGTAFKNRGVQPLLDAVVEFLPAPTDVPAIKGIDVKTETETTRESSDEAPLSMLAFKIMNDPFVGSLTFARIYSGKLTKGVSLENTVKGKRERIGRMLQMHSNSREDIDEAFAGDIVALAGLKETTTGDTLCDPLKPVILERMEFPDPVIEIAIEPKTKADQEKMGIALNRLAAEDPSFRVKSDEESGQTIIAGMGELHLDILVDRMKREFKVEANVGAPQVAYRESITRAAEIDYTHKKQSGGSGQFARVKIIFEPHDGDDFIFESKIVGGSVPKEYIPGVQKGIESVMGAGPLAGFPMLGVKATLIDGAYHDVDSSVLAFEIASRAAFREGAQKAGAQLLEPIMKVEVVTPEDYVGDVIGDLNSRRGQISGTEARGIAAVVNAMVPLANMFGYVNSLRSMSQGRAQYTMQFDHYEPVPTAVAQEIQKKFA</sequence>